<accession>P30661</accession>
<organism>
    <name type="scientific">Suid herpesvirus 1 (strain NIA-3)</name>
    <name type="common">SuHV-1</name>
    <name type="synonym">Pseudorabies virus (strain NIA-3)</name>
    <dbReference type="NCBI Taxonomy" id="10349"/>
    <lineage>
        <taxon>Viruses</taxon>
        <taxon>Duplodnaviria</taxon>
        <taxon>Heunggongvirae</taxon>
        <taxon>Peploviricota</taxon>
        <taxon>Herviviricetes</taxon>
        <taxon>Herpesvirales</taxon>
        <taxon>Orthoherpesviridae</taxon>
        <taxon>Alphaherpesvirinae</taxon>
        <taxon>Varicellovirus</taxon>
        <taxon>Varicellovirus suidalpha1</taxon>
        <taxon>Suid herpesvirus 1</taxon>
    </lineage>
</organism>
<sequence>MLASDRRERRVRLEEAFQRESVFKARTVELLRGRADKKNPEFVRAFMAAKQARRDVERHLRLAARVESVEQKARALQARVEAQAAVRGVLDRHRRFTRADFAEALDAAEDALAAGEDRLDDAAALDEDWAGGGAPDEDEGEEADEALLTQWLLEEAEEA</sequence>
<evidence type="ECO:0000250" key="1"/>
<evidence type="ECO:0000256" key="2">
    <source>
        <dbReference type="SAM" id="MobiDB-lite"/>
    </source>
</evidence>
<evidence type="ECO:0000305" key="3"/>
<organismHost>
    <name type="scientific">Sus scrofa</name>
    <name type="common">Pig</name>
    <dbReference type="NCBI Taxonomy" id="9823"/>
</organismHost>
<proteinExistence type="inferred from homology"/>
<feature type="chain" id="PRO_0000115938" description="Tegument protein UL14">
    <location>
        <begin position="1"/>
        <end position="159"/>
    </location>
</feature>
<feature type="region of interest" description="Disordered" evidence="2">
    <location>
        <begin position="123"/>
        <end position="145"/>
    </location>
</feature>
<name>TEG3_SUHVN</name>
<gene>
    <name type="primary">UL14</name>
</gene>
<dbReference type="EMBL" id="M94870">
    <property type="protein sequence ID" value="AAA47480.1"/>
    <property type="molecule type" value="Genomic_DNA"/>
</dbReference>
<dbReference type="PIR" id="A42744">
    <property type="entry name" value="WZBEE3"/>
</dbReference>
<dbReference type="RefSeq" id="YP_068361.1">
    <property type="nucleotide sequence ID" value="NC_006151.1"/>
</dbReference>
<dbReference type="SMR" id="P30661"/>
<dbReference type="GeneID" id="2952529"/>
<dbReference type="KEGG" id="vg:2952529"/>
<dbReference type="GO" id="GO:0030430">
    <property type="term" value="C:host cell cytoplasm"/>
    <property type="evidence" value="ECO:0007669"/>
    <property type="project" value="UniProtKB-SubCell"/>
</dbReference>
<dbReference type="GO" id="GO:0042025">
    <property type="term" value="C:host cell nucleus"/>
    <property type="evidence" value="ECO:0007669"/>
    <property type="project" value="UniProtKB-SubCell"/>
</dbReference>
<dbReference type="GO" id="GO:0019033">
    <property type="term" value="C:viral tegument"/>
    <property type="evidence" value="ECO:0007669"/>
    <property type="project" value="UniProtKB-SubCell"/>
</dbReference>
<dbReference type="InterPro" id="IPR005207">
    <property type="entry name" value="Herpes_UL14"/>
</dbReference>
<dbReference type="Pfam" id="PF03580">
    <property type="entry name" value="Herpes_UL14"/>
    <property type="match status" value="1"/>
</dbReference>
<reference key="1">
    <citation type="journal article" date="1992" name="J. Virol.">
        <title>Herpesviruses encode an unusual protein-serine/threonine kinase which is nonessential for growth in cultured cells.</title>
        <authorList>
            <person name="de Wind N."/>
            <person name="Domen J."/>
            <person name="Berns A.A."/>
        </authorList>
    </citation>
    <scope>NUCLEOTIDE SEQUENCE [GENOMIC DNA]</scope>
</reference>
<protein>
    <recommendedName>
        <fullName>Tegument protein UL14</fullName>
    </recommendedName>
</protein>
<keyword id="KW-1035">Host cytoplasm</keyword>
<keyword id="KW-1048">Host nucleus</keyword>
<keyword id="KW-0946">Virion</keyword>
<keyword id="KW-0920">Virion tegument</keyword>
<comment type="function">
    <text evidence="1">Contributes to the nuclear transport of the viral transcriptional activator VP16 during the early phase of infection. Therefore, participates indirectly in the regulation of the immediate-early gene expression. Additionally, seems to be important for efficient nuclear targeting of capsids (By similarity).</text>
</comment>
<comment type="subcellular location">
    <subcellularLocation>
        <location evidence="1">Virion tegument</location>
    </subcellularLocation>
    <subcellularLocation>
        <location evidence="1">Host cytoplasm</location>
    </subcellularLocation>
    <subcellularLocation>
        <location evidence="1">Host nucleus</location>
    </subcellularLocation>
</comment>
<comment type="similarity">
    <text evidence="3">Belongs to the alphaherpesvirinae HHV-1 UL14 protein family.</text>
</comment>